<evidence type="ECO:0000255" key="1">
    <source>
        <dbReference type="HAMAP-Rule" id="MF_00235"/>
    </source>
</evidence>
<keyword id="KW-0067">ATP-binding</keyword>
<keyword id="KW-0963">Cytoplasm</keyword>
<keyword id="KW-0418">Kinase</keyword>
<keyword id="KW-0545">Nucleotide biosynthesis</keyword>
<keyword id="KW-0547">Nucleotide-binding</keyword>
<keyword id="KW-1185">Reference proteome</keyword>
<keyword id="KW-0808">Transferase</keyword>
<protein>
    <recommendedName>
        <fullName evidence="1">Adenylate kinase</fullName>
        <shortName evidence="1">AK</shortName>
        <ecNumber evidence="1">2.7.4.3</ecNumber>
    </recommendedName>
    <alternativeName>
        <fullName evidence="1">ATP-AMP transphosphorylase</fullName>
    </alternativeName>
    <alternativeName>
        <fullName evidence="1">ATP:AMP phosphotransferase</fullName>
    </alternativeName>
    <alternativeName>
        <fullName evidence="1">Adenylate monophosphate kinase</fullName>
    </alternativeName>
</protein>
<reference key="1">
    <citation type="journal article" date="2010" name="BMC Genomics">
        <title>Complete genome sequence and lifestyle of black-pigmented Corynebacterium aurimucosum ATCC 700975 (formerly C. nigricans CN-1) isolated from a vaginal swab of a woman with spontaneous abortion.</title>
        <authorList>
            <person name="Trost E."/>
            <person name="Gotker S."/>
            <person name="Schneider J."/>
            <person name="Schneiker-Bekel S."/>
            <person name="Szczepanowski R."/>
            <person name="Tilker A."/>
            <person name="Viehoever P."/>
            <person name="Arnold W."/>
            <person name="Bekel T."/>
            <person name="Blom J."/>
            <person name="Gartemann K.H."/>
            <person name="Linke B."/>
            <person name="Goesmann A."/>
            <person name="Puhler A."/>
            <person name="Shukla S.K."/>
            <person name="Tauch A."/>
        </authorList>
    </citation>
    <scope>NUCLEOTIDE SEQUENCE [LARGE SCALE GENOMIC DNA]</scope>
    <source>
        <strain>ATCC 700975 / DSM 44827 / CIP 107346 / CN-1</strain>
    </source>
</reference>
<sequence>MRYVLLGPPGAGKGTQAALLSEKLGVPHISTGDLFRANIGEGTPLGLEAKSYIDAGKLVPTDVTARMVEDRLNQDDAKDGFLLDGFPRTVQQADILEKLLSDKDLKLDGVLNFEVSEDVVVERMLARGRADDTEETIRTRLGVYREETFPLIEHYGDAIISIKAEGTVEEINERTLQAMGK</sequence>
<name>KAD_CORA7</name>
<proteinExistence type="inferred from homology"/>
<gene>
    <name evidence="1" type="primary">adk</name>
    <name type="ordered locus">cauri_0438</name>
</gene>
<comment type="function">
    <text evidence="1">Catalyzes the reversible transfer of the terminal phosphate group between ATP and AMP. Plays an important role in cellular energy homeostasis and in adenine nucleotide metabolism.</text>
</comment>
<comment type="catalytic activity">
    <reaction evidence="1">
        <text>AMP + ATP = 2 ADP</text>
        <dbReference type="Rhea" id="RHEA:12973"/>
        <dbReference type="ChEBI" id="CHEBI:30616"/>
        <dbReference type="ChEBI" id="CHEBI:456215"/>
        <dbReference type="ChEBI" id="CHEBI:456216"/>
        <dbReference type="EC" id="2.7.4.3"/>
    </reaction>
</comment>
<comment type="pathway">
    <text evidence="1">Purine metabolism; AMP biosynthesis via salvage pathway; AMP from ADP: step 1/1.</text>
</comment>
<comment type="subunit">
    <text evidence="1">Monomer.</text>
</comment>
<comment type="subcellular location">
    <subcellularLocation>
        <location evidence="1">Cytoplasm</location>
    </subcellularLocation>
</comment>
<comment type="domain">
    <text evidence="1">Consists of three domains, a large central CORE domain and two small peripheral domains, NMPbind and LID, which undergo movements during catalysis. The LID domain closes over the site of phosphoryl transfer upon ATP binding. Assembling and dissambling the active center during each catalytic cycle provides an effective means to prevent ATP hydrolysis.</text>
</comment>
<comment type="similarity">
    <text evidence="1">Belongs to the adenylate kinase family.</text>
</comment>
<accession>C3PL31</accession>
<organism>
    <name type="scientific">Corynebacterium aurimucosum (strain ATCC 700975 / DSM 44827 / CIP 107346 / CN-1)</name>
    <name type="common">Corynebacterium nigricans</name>
    <dbReference type="NCBI Taxonomy" id="548476"/>
    <lineage>
        <taxon>Bacteria</taxon>
        <taxon>Bacillati</taxon>
        <taxon>Actinomycetota</taxon>
        <taxon>Actinomycetes</taxon>
        <taxon>Mycobacteriales</taxon>
        <taxon>Corynebacteriaceae</taxon>
        <taxon>Corynebacterium</taxon>
    </lineage>
</organism>
<dbReference type="EC" id="2.7.4.3" evidence="1"/>
<dbReference type="EMBL" id="CP001601">
    <property type="protein sequence ID" value="ACP32035.1"/>
    <property type="molecule type" value="Genomic_DNA"/>
</dbReference>
<dbReference type="RefSeq" id="WP_010189557.1">
    <property type="nucleotide sequence ID" value="NZ_ACLH01000063.1"/>
</dbReference>
<dbReference type="SMR" id="C3PL31"/>
<dbReference type="STRING" id="548476.cauri_0438"/>
<dbReference type="GeneID" id="31923054"/>
<dbReference type="KEGG" id="car:cauri_0438"/>
<dbReference type="eggNOG" id="COG0563">
    <property type="taxonomic scope" value="Bacteria"/>
</dbReference>
<dbReference type="HOGENOM" id="CLU_032354_4_1_11"/>
<dbReference type="OrthoDB" id="9805030at2"/>
<dbReference type="UniPathway" id="UPA00588">
    <property type="reaction ID" value="UER00649"/>
</dbReference>
<dbReference type="Proteomes" id="UP000002077">
    <property type="component" value="Chromosome"/>
</dbReference>
<dbReference type="GO" id="GO:0005737">
    <property type="term" value="C:cytoplasm"/>
    <property type="evidence" value="ECO:0007669"/>
    <property type="project" value="UniProtKB-SubCell"/>
</dbReference>
<dbReference type="GO" id="GO:0004017">
    <property type="term" value="F:adenylate kinase activity"/>
    <property type="evidence" value="ECO:0007669"/>
    <property type="project" value="UniProtKB-UniRule"/>
</dbReference>
<dbReference type="GO" id="GO:0005524">
    <property type="term" value="F:ATP binding"/>
    <property type="evidence" value="ECO:0007669"/>
    <property type="project" value="UniProtKB-UniRule"/>
</dbReference>
<dbReference type="GO" id="GO:0044209">
    <property type="term" value="P:AMP salvage"/>
    <property type="evidence" value="ECO:0007669"/>
    <property type="project" value="UniProtKB-UniRule"/>
</dbReference>
<dbReference type="CDD" id="cd01428">
    <property type="entry name" value="ADK"/>
    <property type="match status" value="1"/>
</dbReference>
<dbReference type="Gene3D" id="3.40.50.300">
    <property type="entry name" value="P-loop containing nucleotide triphosphate hydrolases"/>
    <property type="match status" value="1"/>
</dbReference>
<dbReference type="HAMAP" id="MF_00235">
    <property type="entry name" value="Adenylate_kinase_Adk"/>
    <property type="match status" value="1"/>
</dbReference>
<dbReference type="InterPro" id="IPR000850">
    <property type="entry name" value="Adenylat/UMP-CMP_kin"/>
</dbReference>
<dbReference type="InterPro" id="IPR033690">
    <property type="entry name" value="Adenylat_kinase_CS"/>
</dbReference>
<dbReference type="InterPro" id="IPR027417">
    <property type="entry name" value="P-loop_NTPase"/>
</dbReference>
<dbReference type="NCBIfam" id="NF001381">
    <property type="entry name" value="PRK00279.1-3"/>
    <property type="match status" value="1"/>
</dbReference>
<dbReference type="NCBIfam" id="NF011100">
    <property type="entry name" value="PRK14527.1"/>
    <property type="match status" value="1"/>
</dbReference>
<dbReference type="NCBIfam" id="NF011104">
    <property type="entry name" value="PRK14531.1"/>
    <property type="match status" value="1"/>
</dbReference>
<dbReference type="PANTHER" id="PTHR23359">
    <property type="entry name" value="NUCLEOTIDE KINASE"/>
    <property type="match status" value="1"/>
</dbReference>
<dbReference type="Pfam" id="PF00406">
    <property type="entry name" value="ADK"/>
    <property type="match status" value="1"/>
</dbReference>
<dbReference type="PRINTS" id="PR00094">
    <property type="entry name" value="ADENYLTKNASE"/>
</dbReference>
<dbReference type="SUPFAM" id="SSF52540">
    <property type="entry name" value="P-loop containing nucleoside triphosphate hydrolases"/>
    <property type="match status" value="1"/>
</dbReference>
<dbReference type="PROSITE" id="PS00113">
    <property type="entry name" value="ADENYLATE_KINASE"/>
    <property type="match status" value="1"/>
</dbReference>
<feature type="chain" id="PRO_1000191135" description="Adenylate kinase">
    <location>
        <begin position="1"/>
        <end position="181"/>
    </location>
</feature>
<feature type="region of interest" description="NMP" evidence="1">
    <location>
        <begin position="30"/>
        <end position="59"/>
    </location>
</feature>
<feature type="region of interest" description="LID" evidence="1">
    <location>
        <begin position="126"/>
        <end position="132"/>
    </location>
</feature>
<feature type="binding site" evidence="1">
    <location>
        <begin position="10"/>
        <end position="15"/>
    </location>
    <ligand>
        <name>ATP</name>
        <dbReference type="ChEBI" id="CHEBI:30616"/>
    </ligand>
</feature>
<feature type="binding site" evidence="1">
    <location>
        <position position="31"/>
    </location>
    <ligand>
        <name>AMP</name>
        <dbReference type="ChEBI" id="CHEBI:456215"/>
    </ligand>
</feature>
<feature type="binding site" evidence="1">
    <location>
        <position position="36"/>
    </location>
    <ligand>
        <name>AMP</name>
        <dbReference type="ChEBI" id="CHEBI:456215"/>
    </ligand>
</feature>
<feature type="binding site" evidence="1">
    <location>
        <begin position="57"/>
        <end position="59"/>
    </location>
    <ligand>
        <name>AMP</name>
        <dbReference type="ChEBI" id="CHEBI:456215"/>
    </ligand>
</feature>
<feature type="binding site" evidence="1">
    <location>
        <begin position="85"/>
        <end position="88"/>
    </location>
    <ligand>
        <name>AMP</name>
        <dbReference type="ChEBI" id="CHEBI:456215"/>
    </ligand>
</feature>
<feature type="binding site" evidence="1">
    <location>
        <position position="92"/>
    </location>
    <ligand>
        <name>AMP</name>
        <dbReference type="ChEBI" id="CHEBI:456215"/>
    </ligand>
</feature>
<feature type="binding site" evidence="1">
    <location>
        <position position="127"/>
    </location>
    <ligand>
        <name>ATP</name>
        <dbReference type="ChEBI" id="CHEBI:30616"/>
    </ligand>
</feature>
<feature type="binding site" evidence="1">
    <location>
        <position position="129"/>
    </location>
    <ligand>
        <name>AMP</name>
        <dbReference type="ChEBI" id="CHEBI:456215"/>
    </ligand>
</feature>
<feature type="binding site" evidence="1">
    <location>
        <position position="140"/>
    </location>
    <ligand>
        <name>AMP</name>
        <dbReference type="ChEBI" id="CHEBI:456215"/>
    </ligand>
</feature>
<feature type="binding site" evidence="1">
    <location>
        <position position="166"/>
    </location>
    <ligand>
        <name>ATP</name>
        <dbReference type="ChEBI" id="CHEBI:30616"/>
    </ligand>
</feature>